<reference key="1">
    <citation type="journal article" date="2002" name="Nature">
        <title>The genome sequence of Schizosaccharomyces pombe.</title>
        <authorList>
            <person name="Wood V."/>
            <person name="Gwilliam R."/>
            <person name="Rajandream M.A."/>
            <person name="Lyne M.H."/>
            <person name="Lyne R."/>
            <person name="Stewart A."/>
            <person name="Sgouros J.G."/>
            <person name="Peat N."/>
            <person name="Hayles J."/>
            <person name="Baker S.G."/>
            <person name="Basham D."/>
            <person name="Bowman S."/>
            <person name="Brooks K."/>
            <person name="Brown D."/>
            <person name="Brown S."/>
            <person name="Chillingworth T."/>
            <person name="Churcher C.M."/>
            <person name="Collins M."/>
            <person name="Connor R."/>
            <person name="Cronin A."/>
            <person name="Davis P."/>
            <person name="Feltwell T."/>
            <person name="Fraser A."/>
            <person name="Gentles S."/>
            <person name="Goble A."/>
            <person name="Hamlin N."/>
            <person name="Harris D.E."/>
            <person name="Hidalgo J."/>
            <person name="Hodgson G."/>
            <person name="Holroyd S."/>
            <person name="Hornsby T."/>
            <person name="Howarth S."/>
            <person name="Huckle E.J."/>
            <person name="Hunt S."/>
            <person name="Jagels K."/>
            <person name="James K.D."/>
            <person name="Jones L."/>
            <person name="Jones M."/>
            <person name="Leather S."/>
            <person name="McDonald S."/>
            <person name="McLean J."/>
            <person name="Mooney P."/>
            <person name="Moule S."/>
            <person name="Mungall K.L."/>
            <person name="Murphy L.D."/>
            <person name="Niblett D."/>
            <person name="Odell C."/>
            <person name="Oliver K."/>
            <person name="O'Neil S."/>
            <person name="Pearson D."/>
            <person name="Quail M.A."/>
            <person name="Rabbinowitsch E."/>
            <person name="Rutherford K.M."/>
            <person name="Rutter S."/>
            <person name="Saunders D."/>
            <person name="Seeger K."/>
            <person name="Sharp S."/>
            <person name="Skelton J."/>
            <person name="Simmonds M.N."/>
            <person name="Squares R."/>
            <person name="Squares S."/>
            <person name="Stevens K."/>
            <person name="Taylor K."/>
            <person name="Taylor R.G."/>
            <person name="Tivey A."/>
            <person name="Walsh S.V."/>
            <person name="Warren T."/>
            <person name="Whitehead S."/>
            <person name="Woodward J.R."/>
            <person name="Volckaert G."/>
            <person name="Aert R."/>
            <person name="Robben J."/>
            <person name="Grymonprez B."/>
            <person name="Weltjens I."/>
            <person name="Vanstreels E."/>
            <person name="Rieger M."/>
            <person name="Schaefer M."/>
            <person name="Mueller-Auer S."/>
            <person name="Gabel C."/>
            <person name="Fuchs M."/>
            <person name="Duesterhoeft A."/>
            <person name="Fritzc C."/>
            <person name="Holzer E."/>
            <person name="Moestl D."/>
            <person name="Hilbert H."/>
            <person name="Borzym K."/>
            <person name="Langer I."/>
            <person name="Beck A."/>
            <person name="Lehrach H."/>
            <person name="Reinhardt R."/>
            <person name="Pohl T.M."/>
            <person name="Eger P."/>
            <person name="Zimmermann W."/>
            <person name="Wedler H."/>
            <person name="Wambutt R."/>
            <person name="Purnelle B."/>
            <person name="Goffeau A."/>
            <person name="Cadieu E."/>
            <person name="Dreano S."/>
            <person name="Gloux S."/>
            <person name="Lelaure V."/>
            <person name="Mottier S."/>
            <person name="Galibert F."/>
            <person name="Aves S.J."/>
            <person name="Xiang Z."/>
            <person name="Hunt C."/>
            <person name="Moore K."/>
            <person name="Hurst S.M."/>
            <person name="Lucas M."/>
            <person name="Rochet M."/>
            <person name="Gaillardin C."/>
            <person name="Tallada V.A."/>
            <person name="Garzon A."/>
            <person name="Thode G."/>
            <person name="Daga R.R."/>
            <person name="Cruzado L."/>
            <person name="Jimenez J."/>
            <person name="Sanchez M."/>
            <person name="del Rey F."/>
            <person name="Benito J."/>
            <person name="Dominguez A."/>
            <person name="Revuelta J.L."/>
            <person name="Moreno S."/>
            <person name="Armstrong J."/>
            <person name="Forsburg S.L."/>
            <person name="Cerutti L."/>
            <person name="Lowe T."/>
            <person name="McCombie W.R."/>
            <person name="Paulsen I."/>
            <person name="Potashkin J."/>
            <person name="Shpakovski G.V."/>
            <person name="Ussery D."/>
            <person name="Barrell B.G."/>
            <person name="Nurse P."/>
        </authorList>
    </citation>
    <scope>NUCLEOTIDE SEQUENCE [LARGE SCALE GENOMIC DNA]</scope>
    <source>
        <strain>972 / ATCC 24843</strain>
    </source>
</reference>
<reference key="2">
    <citation type="journal article" date="2006" name="Nat. Biotechnol.">
        <title>ORFeome cloning and global analysis of protein localization in the fission yeast Schizosaccharomyces pombe.</title>
        <authorList>
            <person name="Matsuyama A."/>
            <person name="Arai R."/>
            <person name="Yashiroda Y."/>
            <person name="Shirai A."/>
            <person name="Kamata A."/>
            <person name="Sekido S."/>
            <person name="Kobayashi Y."/>
            <person name="Hashimoto A."/>
            <person name="Hamamoto M."/>
            <person name="Hiraoka Y."/>
            <person name="Horinouchi S."/>
            <person name="Yoshida M."/>
        </authorList>
    </citation>
    <scope>SUBCELLULAR LOCATION [LARGE SCALE ANALYSIS]</scope>
</reference>
<gene>
    <name type="ORF">SPCC338.06c</name>
</gene>
<proteinExistence type="inferred from homology"/>
<protein>
    <recommendedName>
        <fullName>Heat shock protein homolog C338.06c</fullName>
    </recommendedName>
</protein>
<comment type="subcellular location">
    <subcellularLocation>
        <location evidence="2">Mitochondrion</location>
    </subcellularLocation>
</comment>
<comment type="similarity">
    <text evidence="1">Belongs to the small heat shock protein (HSP20) family.</text>
</comment>
<keyword id="KW-0496">Mitochondrion</keyword>
<keyword id="KW-1185">Reference proteome</keyword>
<keyword id="KW-0346">Stress response</keyword>
<evidence type="ECO:0000255" key="1">
    <source>
        <dbReference type="PROSITE-ProRule" id="PRU00285"/>
    </source>
</evidence>
<evidence type="ECO:0000269" key="2">
    <source>
    </source>
</evidence>
<organism>
    <name type="scientific">Schizosaccharomyces pombe (strain 972 / ATCC 24843)</name>
    <name type="common">Fission yeast</name>
    <dbReference type="NCBI Taxonomy" id="284812"/>
    <lineage>
        <taxon>Eukaryota</taxon>
        <taxon>Fungi</taxon>
        <taxon>Dikarya</taxon>
        <taxon>Ascomycota</taxon>
        <taxon>Taphrinomycotina</taxon>
        <taxon>Schizosaccharomycetes</taxon>
        <taxon>Schizosaccharomycetales</taxon>
        <taxon>Schizosaccharomycetaceae</taxon>
        <taxon>Schizosaccharomyces</taxon>
    </lineage>
</organism>
<feature type="chain" id="PRO_0000310435" description="Heat shock protein homolog C338.06c">
    <location>
        <begin position="1"/>
        <end position="139"/>
    </location>
</feature>
<feature type="domain" description="sHSP" evidence="1">
    <location>
        <begin position="27"/>
        <end position="139"/>
    </location>
</feature>
<name>HSP15_SCHPO</name>
<accession>O74984</accession>
<sequence>MLFDAFTNGFMNDIFEFGDRSKFNRSAWLSCWGPALELRETEDTIEVDVEVPGIDKQNLKVDLHGSKLTISGERKKPEEEKAGPLIRWSERCVGAFSRTITLPQPVDEKLIHASLNNGILSIVMKKKNPEFTTRIVEIQ</sequence>
<dbReference type="EMBL" id="CU329672">
    <property type="protein sequence ID" value="CAA19337.1"/>
    <property type="molecule type" value="Genomic_DNA"/>
</dbReference>
<dbReference type="PIR" id="T41736">
    <property type="entry name" value="T41736"/>
</dbReference>
<dbReference type="SMR" id="O74984"/>
<dbReference type="BioGRID" id="275322">
    <property type="interactions" value="1"/>
</dbReference>
<dbReference type="FunCoup" id="O74984">
    <property type="interactions" value="172"/>
</dbReference>
<dbReference type="STRING" id="284812.O74984"/>
<dbReference type="iPTMnet" id="O74984"/>
<dbReference type="PaxDb" id="4896-SPCC338.06c.1"/>
<dbReference type="EnsemblFungi" id="SPCC338.06c.1">
    <property type="protein sequence ID" value="SPCC338.06c.1:pep"/>
    <property type="gene ID" value="SPCC338.06c"/>
</dbReference>
<dbReference type="KEGG" id="spo:2538739"/>
<dbReference type="PomBase" id="SPCC338.06c"/>
<dbReference type="VEuPathDB" id="FungiDB:SPCC338.06c"/>
<dbReference type="eggNOG" id="KOG0710">
    <property type="taxonomic scope" value="Eukaryota"/>
</dbReference>
<dbReference type="HOGENOM" id="CLU_046737_8_4_1"/>
<dbReference type="InParanoid" id="O74984"/>
<dbReference type="OMA" id="IRWSERC"/>
<dbReference type="PhylomeDB" id="O74984"/>
<dbReference type="PRO" id="PR:O74984"/>
<dbReference type="Proteomes" id="UP000002485">
    <property type="component" value="Chromosome III"/>
</dbReference>
<dbReference type="GO" id="GO:0005739">
    <property type="term" value="C:mitochondrion"/>
    <property type="evidence" value="ECO:0007005"/>
    <property type="project" value="PomBase"/>
</dbReference>
<dbReference type="GO" id="GO:0044183">
    <property type="term" value="F:protein folding chaperone"/>
    <property type="evidence" value="ECO:0000269"/>
    <property type="project" value="PomBase"/>
</dbReference>
<dbReference type="GO" id="GO:0061077">
    <property type="term" value="P:chaperone-mediated protein folding"/>
    <property type="evidence" value="ECO:0000269"/>
    <property type="project" value="PomBase"/>
</dbReference>
<dbReference type="CDD" id="cd06464">
    <property type="entry name" value="ACD_sHsps-like"/>
    <property type="match status" value="1"/>
</dbReference>
<dbReference type="FunFam" id="2.60.40.790:FF:000065">
    <property type="entry name" value="Heat shock protein"/>
    <property type="match status" value="1"/>
</dbReference>
<dbReference type="Gene3D" id="2.60.40.790">
    <property type="match status" value="1"/>
</dbReference>
<dbReference type="InterPro" id="IPR002068">
    <property type="entry name" value="A-crystallin/Hsp20_dom"/>
</dbReference>
<dbReference type="InterPro" id="IPR008978">
    <property type="entry name" value="HSP20-like_chaperone"/>
</dbReference>
<dbReference type="InterPro" id="IPR031107">
    <property type="entry name" value="Small_HSP"/>
</dbReference>
<dbReference type="PANTHER" id="PTHR11527">
    <property type="entry name" value="HEAT-SHOCK PROTEIN 20 FAMILY MEMBER"/>
    <property type="match status" value="1"/>
</dbReference>
<dbReference type="Pfam" id="PF00011">
    <property type="entry name" value="HSP20"/>
    <property type="match status" value="1"/>
</dbReference>
<dbReference type="SUPFAM" id="SSF49764">
    <property type="entry name" value="HSP20-like chaperones"/>
    <property type="match status" value="1"/>
</dbReference>
<dbReference type="PROSITE" id="PS01031">
    <property type="entry name" value="SHSP"/>
    <property type="match status" value="1"/>
</dbReference>